<accession>P64625</accession>
<accession>P45533</accession>
<reference key="1">
    <citation type="journal article" date="2002" name="Proc. Natl. Acad. Sci. U.S.A.">
        <title>Extensive mosaic structure revealed by the complete genome sequence of uropathogenic Escherichia coli.</title>
        <authorList>
            <person name="Welch R.A."/>
            <person name="Burland V."/>
            <person name="Plunkett G. III"/>
            <person name="Redford P."/>
            <person name="Roesch P."/>
            <person name="Rasko D."/>
            <person name="Buckles E.L."/>
            <person name="Liou S.-R."/>
            <person name="Boutin A."/>
            <person name="Hackett J."/>
            <person name="Stroud D."/>
            <person name="Mayhew G.F."/>
            <person name="Rose D.J."/>
            <person name="Zhou S."/>
            <person name="Schwartz D.C."/>
            <person name="Perna N.T."/>
            <person name="Mobley H.L.T."/>
            <person name="Donnenberg M.S."/>
            <person name="Blattner F.R."/>
        </authorList>
    </citation>
    <scope>NUCLEOTIDE SEQUENCE [LARGE SCALE GENOMIC DNA]</scope>
    <source>
        <strain>CFT073 / ATCC 700928 / UPEC</strain>
    </source>
</reference>
<sequence length="240" mass="26821">MSRSLLTNETSELDLLDQRPFDQTDFDILKSYEAVVDGLAMLIGSHCEIVLHSLQDLKCSAIRIANGEHTGRKIGSPITDLALRMLHDMTGADSSVSKCYFTRAKSGVLMKSLTIAIRNREQRVIGLLCINMNLDVPFSQIMSTFVPPETPDVGSSVNFASSVEDLVTQTLEFTIEEVNADRNVSNNAKNRQIVLNLYEKGIFDIKDAINQVADRLNISKHTVYLYIRQFKSGDFQGQDK</sequence>
<gene>
    <name type="primary">yheO</name>
    <name type="ordered locus">c4120</name>
</gene>
<keyword id="KW-1185">Reference proteome</keyword>
<proteinExistence type="predicted"/>
<name>YHEO_ECOL6</name>
<comment type="similarity">
    <text evidence="1">To H.influenzae HI_0575.</text>
</comment>
<comment type="sequence caution" evidence="1">
    <conflict type="erroneous initiation">
        <sequence resource="EMBL-CDS" id="AAN82558"/>
    </conflict>
</comment>
<protein>
    <recommendedName>
        <fullName>Uncharacterized protein YheO</fullName>
    </recommendedName>
</protein>
<evidence type="ECO:0000305" key="1"/>
<feature type="chain" id="PRO_0000169510" description="Uncharacterized protein YheO">
    <location>
        <begin position="1"/>
        <end position="240"/>
    </location>
</feature>
<organism>
    <name type="scientific">Escherichia coli O6:H1 (strain CFT073 / ATCC 700928 / UPEC)</name>
    <dbReference type="NCBI Taxonomy" id="199310"/>
    <lineage>
        <taxon>Bacteria</taxon>
        <taxon>Pseudomonadati</taxon>
        <taxon>Pseudomonadota</taxon>
        <taxon>Gammaproteobacteria</taxon>
        <taxon>Enterobacterales</taxon>
        <taxon>Enterobacteriaceae</taxon>
        <taxon>Escherichia</taxon>
    </lineage>
</organism>
<dbReference type="EMBL" id="AE014075">
    <property type="protein sequence ID" value="AAN82558.1"/>
    <property type="status" value="ALT_INIT"/>
    <property type="molecule type" value="Genomic_DNA"/>
</dbReference>
<dbReference type="RefSeq" id="WP_000091466.1">
    <property type="nucleotide sequence ID" value="NZ_CP051263.1"/>
</dbReference>
<dbReference type="STRING" id="199310.c4120"/>
<dbReference type="KEGG" id="ecc:c4120"/>
<dbReference type="eggNOG" id="COG2964">
    <property type="taxonomic scope" value="Bacteria"/>
</dbReference>
<dbReference type="HOGENOM" id="CLU_080179_3_0_6"/>
<dbReference type="Proteomes" id="UP000001410">
    <property type="component" value="Chromosome"/>
</dbReference>
<dbReference type="InterPro" id="IPR039446">
    <property type="entry name" value="DauR-like"/>
</dbReference>
<dbReference type="InterPro" id="IPR039445">
    <property type="entry name" value="DauR-like_HTH"/>
</dbReference>
<dbReference type="InterPro" id="IPR013559">
    <property type="entry name" value="YheO"/>
</dbReference>
<dbReference type="PANTHER" id="PTHR35568">
    <property type="entry name" value="TRANSCRIPTIONAL REGULATOR DAUR"/>
    <property type="match status" value="1"/>
</dbReference>
<dbReference type="PANTHER" id="PTHR35568:SF1">
    <property type="entry name" value="TRANSCRIPTIONAL REGULATOR DAUR"/>
    <property type="match status" value="1"/>
</dbReference>
<dbReference type="Pfam" id="PF13309">
    <property type="entry name" value="HTH_22"/>
    <property type="match status" value="1"/>
</dbReference>
<dbReference type="Pfam" id="PF08348">
    <property type="entry name" value="PAS_6"/>
    <property type="match status" value="1"/>
</dbReference>